<keyword id="KW-0175">Coiled coil</keyword>
<keyword id="KW-1185">Reference proteome</keyword>
<feature type="chain" id="PRO_0000223317" description="Coiled-coil domain-containing protein 178">
    <location>
        <begin position="1"/>
        <end position="866"/>
    </location>
</feature>
<feature type="region of interest" description="Disordered" evidence="2">
    <location>
        <begin position="1"/>
        <end position="21"/>
    </location>
</feature>
<feature type="coiled-coil region" evidence="1">
    <location>
        <begin position="157"/>
        <end position="266"/>
    </location>
</feature>
<feature type="coiled-coil region" evidence="1">
    <location>
        <begin position="292"/>
        <end position="403"/>
    </location>
</feature>
<feature type="coiled-coil region" evidence="1">
    <location>
        <begin position="439"/>
        <end position="480"/>
    </location>
</feature>
<feature type="coiled-coil region" evidence="1">
    <location>
        <begin position="514"/>
        <end position="539"/>
    </location>
</feature>
<feature type="coiled-coil region" evidence="1">
    <location>
        <begin position="570"/>
        <end position="631"/>
    </location>
</feature>
<feature type="coiled-coil region" evidence="1">
    <location>
        <begin position="665"/>
        <end position="705"/>
    </location>
</feature>
<feature type="sequence conflict" description="In Ref. 1; BAC26501." evidence="3" ref="1">
    <original>D</original>
    <variation>H</variation>
    <location>
        <position position="350"/>
    </location>
</feature>
<feature type="sequence conflict" description="In Ref. 1; BAC26501." evidence="3" ref="1">
    <original>K</original>
    <variation>N</variation>
    <location>
        <position position="742"/>
    </location>
</feature>
<feature type="sequence conflict" description="In Ref. 1; BAC26501." evidence="3" ref="1">
    <original>N</original>
    <variation>D</variation>
    <location>
        <position position="831"/>
    </location>
</feature>
<gene>
    <name type="primary">Ccdc178</name>
</gene>
<protein>
    <recommendedName>
        <fullName>Coiled-coil domain-containing protein 178</fullName>
    </recommendedName>
</protein>
<organism>
    <name type="scientific">Mus musculus</name>
    <name type="common">Mouse</name>
    <dbReference type="NCBI Taxonomy" id="10090"/>
    <lineage>
        <taxon>Eukaryota</taxon>
        <taxon>Metazoa</taxon>
        <taxon>Chordata</taxon>
        <taxon>Craniata</taxon>
        <taxon>Vertebrata</taxon>
        <taxon>Euteleostomi</taxon>
        <taxon>Mammalia</taxon>
        <taxon>Eutheria</taxon>
        <taxon>Euarchontoglires</taxon>
        <taxon>Glires</taxon>
        <taxon>Rodentia</taxon>
        <taxon>Myomorpha</taxon>
        <taxon>Muroidea</taxon>
        <taxon>Muridae</taxon>
        <taxon>Murinae</taxon>
        <taxon>Mus</taxon>
        <taxon>Mus</taxon>
    </lineage>
</organism>
<name>CC178_MOUSE</name>
<reference key="1">
    <citation type="journal article" date="2005" name="Science">
        <title>The transcriptional landscape of the mammalian genome.</title>
        <authorList>
            <person name="Carninci P."/>
            <person name="Kasukawa T."/>
            <person name="Katayama S."/>
            <person name="Gough J."/>
            <person name="Frith M.C."/>
            <person name="Maeda N."/>
            <person name="Oyama R."/>
            <person name="Ravasi T."/>
            <person name="Lenhard B."/>
            <person name="Wells C."/>
            <person name="Kodzius R."/>
            <person name="Shimokawa K."/>
            <person name="Bajic V.B."/>
            <person name="Brenner S.E."/>
            <person name="Batalov S."/>
            <person name="Forrest A.R."/>
            <person name="Zavolan M."/>
            <person name="Davis M.J."/>
            <person name="Wilming L.G."/>
            <person name="Aidinis V."/>
            <person name="Allen J.E."/>
            <person name="Ambesi-Impiombato A."/>
            <person name="Apweiler R."/>
            <person name="Aturaliya R.N."/>
            <person name="Bailey T.L."/>
            <person name="Bansal M."/>
            <person name="Baxter L."/>
            <person name="Beisel K.W."/>
            <person name="Bersano T."/>
            <person name="Bono H."/>
            <person name="Chalk A.M."/>
            <person name="Chiu K.P."/>
            <person name="Choudhary V."/>
            <person name="Christoffels A."/>
            <person name="Clutterbuck D.R."/>
            <person name="Crowe M.L."/>
            <person name="Dalla E."/>
            <person name="Dalrymple B.P."/>
            <person name="de Bono B."/>
            <person name="Della Gatta G."/>
            <person name="di Bernardo D."/>
            <person name="Down T."/>
            <person name="Engstrom P."/>
            <person name="Fagiolini M."/>
            <person name="Faulkner G."/>
            <person name="Fletcher C.F."/>
            <person name="Fukushima T."/>
            <person name="Furuno M."/>
            <person name="Futaki S."/>
            <person name="Gariboldi M."/>
            <person name="Georgii-Hemming P."/>
            <person name="Gingeras T.R."/>
            <person name="Gojobori T."/>
            <person name="Green R.E."/>
            <person name="Gustincich S."/>
            <person name="Harbers M."/>
            <person name="Hayashi Y."/>
            <person name="Hensch T.K."/>
            <person name="Hirokawa N."/>
            <person name="Hill D."/>
            <person name="Huminiecki L."/>
            <person name="Iacono M."/>
            <person name="Ikeo K."/>
            <person name="Iwama A."/>
            <person name="Ishikawa T."/>
            <person name="Jakt M."/>
            <person name="Kanapin A."/>
            <person name="Katoh M."/>
            <person name="Kawasawa Y."/>
            <person name="Kelso J."/>
            <person name="Kitamura H."/>
            <person name="Kitano H."/>
            <person name="Kollias G."/>
            <person name="Krishnan S.P."/>
            <person name="Kruger A."/>
            <person name="Kummerfeld S.K."/>
            <person name="Kurochkin I.V."/>
            <person name="Lareau L.F."/>
            <person name="Lazarevic D."/>
            <person name="Lipovich L."/>
            <person name="Liu J."/>
            <person name="Liuni S."/>
            <person name="McWilliam S."/>
            <person name="Madan Babu M."/>
            <person name="Madera M."/>
            <person name="Marchionni L."/>
            <person name="Matsuda H."/>
            <person name="Matsuzawa S."/>
            <person name="Miki H."/>
            <person name="Mignone F."/>
            <person name="Miyake S."/>
            <person name="Morris K."/>
            <person name="Mottagui-Tabar S."/>
            <person name="Mulder N."/>
            <person name="Nakano N."/>
            <person name="Nakauchi H."/>
            <person name="Ng P."/>
            <person name="Nilsson R."/>
            <person name="Nishiguchi S."/>
            <person name="Nishikawa S."/>
            <person name="Nori F."/>
            <person name="Ohara O."/>
            <person name="Okazaki Y."/>
            <person name="Orlando V."/>
            <person name="Pang K.C."/>
            <person name="Pavan W.J."/>
            <person name="Pavesi G."/>
            <person name="Pesole G."/>
            <person name="Petrovsky N."/>
            <person name="Piazza S."/>
            <person name="Reed J."/>
            <person name="Reid J.F."/>
            <person name="Ring B.Z."/>
            <person name="Ringwald M."/>
            <person name="Rost B."/>
            <person name="Ruan Y."/>
            <person name="Salzberg S.L."/>
            <person name="Sandelin A."/>
            <person name="Schneider C."/>
            <person name="Schoenbach C."/>
            <person name="Sekiguchi K."/>
            <person name="Semple C.A."/>
            <person name="Seno S."/>
            <person name="Sessa L."/>
            <person name="Sheng Y."/>
            <person name="Shibata Y."/>
            <person name="Shimada H."/>
            <person name="Shimada K."/>
            <person name="Silva D."/>
            <person name="Sinclair B."/>
            <person name="Sperling S."/>
            <person name="Stupka E."/>
            <person name="Sugiura K."/>
            <person name="Sultana R."/>
            <person name="Takenaka Y."/>
            <person name="Taki K."/>
            <person name="Tammoja K."/>
            <person name="Tan S.L."/>
            <person name="Tang S."/>
            <person name="Taylor M.S."/>
            <person name="Tegner J."/>
            <person name="Teichmann S.A."/>
            <person name="Ueda H.R."/>
            <person name="van Nimwegen E."/>
            <person name="Verardo R."/>
            <person name="Wei C.L."/>
            <person name="Yagi K."/>
            <person name="Yamanishi H."/>
            <person name="Zabarovsky E."/>
            <person name="Zhu S."/>
            <person name="Zimmer A."/>
            <person name="Hide W."/>
            <person name="Bult C."/>
            <person name="Grimmond S.M."/>
            <person name="Teasdale R.D."/>
            <person name="Liu E.T."/>
            <person name="Brusic V."/>
            <person name="Quackenbush J."/>
            <person name="Wahlestedt C."/>
            <person name="Mattick J.S."/>
            <person name="Hume D.A."/>
            <person name="Kai C."/>
            <person name="Sasaki D."/>
            <person name="Tomaru Y."/>
            <person name="Fukuda S."/>
            <person name="Kanamori-Katayama M."/>
            <person name="Suzuki M."/>
            <person name="Aoki J."/>
            <person name="Arakawa T."/>
            <person name="Iida J."/>
            <person name="Imamura K."/>
            <person name="Itoh M."/>
            <person name="Kato T."/>
            <person name="Kawaji H."/>
            <person name="Kawagashira N."/>
            <person name="Kawashima T."/>
            <person name="Kojima M."/>
            <person name="Kondo S."/>
            <person name="Konno H."/>
            <person name="Nakano K."/>
            <person name="Ninomiya N."/>
            <person name="Nishio T."/>
            <person name="Okada M."/>
            <person name="Plessy C."/>
            <person name="Shibata K."/>
            <person name="Shiraki T."/>
            <person name="Suzuki S."/>
            <person name="Tagami M."/>
            <person name="Waki K."/>
            <person name="Watahiki A."/>
            <person name="Okamura-Oho Y."/>
            <person name="Suzuki H."/>
            <person name="Kawai J."/>
            <person name="Hayashizaki Y."/>
        </authorList>
    </citation>
    <scope>NUCLEOTIDE SEQUENCE [LARGE SCALE MRNA]</scope>
    <source>
        <strain>C57BL/6J</strain>
        <tissue>Testis</tissue>
    </source>
</reference>
<reference key="2">
    <citation type="journal article" date="2004" name="Genome Res.">
        <title>The status, quality, and expansion of the NIH full-length cDNA project: the Mammalian Gene Collection (MGC).</title>
        <authorList>
            <consortium name="The MGC Project Team"/>
        </authorList>
    </citation>
    <scope>NUCLEOTIDE SEQUENCE [LARGE SCALE MRNA]</scope>
    <source>
        <tissue>Brain</tissue>
    </source>
</reference>
<sequence length="866" mass="103041">MPENEKEPAQPTTNEDALDTGKTCLQIKELKDKERALMLAENARMQGLSEFFFSRHEDKRLYESKSTNTEDVNKAIYFSYPSRRHSCTLVNIPKPCVNKMISHIEDVESKIQEHLTQFEASFEEWTSVTKDKEAGLDVSAPEKQVHPEKGKDEKCPELKKRMETLLSEAIHLIKSLETDRAEAEQALKQHKSRKKKISMKIDSWSIWKLQELPLAVQKEHENFSKINAELRSYLEDIALKVEQLQERKEKLEKANAKLQVDIDYMASHSVLLEKKRKQELGCLKERYHKKFEVMEKFRAIHEELKESVDKCEGAKARLKNMKVENEREIQEELINATSYEKELDKLSVLDAHYTTSIETVNLDIEGDEEAMNEVLRETQSTTNELENLKKTVDDLKRLFDQYCWRQRKYENEYLEAFSNFYSLKKTWDIELSNVSKDAKDLTIVYEAQSEENKRIQSEIQSITDDIEESIKKTAEMEEEVHTFVEMKMKNNNYLKQLYKQAYQVGAVYHLSRHKTEELEDKLADLKRIFKGREELLKKLTRGDIATGIEIQKRLYAIEETQFIEMQEFIRRQVLYNMALLEVEEQLKELEAEAVRIRYLHRQHSKMLHNIRKRKERVKKNVDATKKKLLKKSKKSRMELTRTEGKRSIIHEEIEIARGQTVALHEKCIELSKEIRIMNLERTNYEERLKKLQEEFFKLQFDREHVHGVYDHLMREKQYCEERIFEEERRFRRLIDMRKNTLKNIRKCQDDLLEENLRLAKEYQSAQLIFLKEKESYFNGYDRLLSLNFSLSDKKKLCQLQKRLDQKWQEYFRLMILFNKTKLAKFQGDSQNSIQKILAVQEESSSLMQHILDFFKSFPNSSCGEDD</sequence>
<dbReference type="EMBL" id="AK029534">
    <property type="protein sequence ID" value="BAC26501.1"/>
    <property type="molecule type" value="mRNA"/>
</dbReference>
<dbReference type="EMBL" id="BC140993">
    <property type="protein sequence ID" value="AAI40994.1"/>
    <property type="molecule type" value="mRNA"/>
</dbReference>
<dbReference type="EMBL" id="BC145066">
    <property type="protein sequence ID" value="AAI45067.1"/>
    <property type="molecule type" value="mRNA"/>
</dbReference>
<dbReference type="CCDS" id="CCDS29092.1"/>
<dbReference type="RefSeq" id="NP_081892.2">
    <property type="nucleotide sequence ID" value="NM_027616.3"/>
</dbReference>
<dbReference type="SMR" id="Q8CDV0"/>
<dbReference type="FunCoup" id="Q8CDV0">
    <property type="interactions" value="26"/>
</dbReference>
<dbReference type="STRING" id="10090.ENSMUSP00000157323"/>
<dbReference type="iPTMnet" id="Q8CDV0"/>
<dbReference type="PhosphoSitePlus" id="Q8CDV0"/>
<dbReference type="PaxDb" id="10090-ENSMUSP00000025160"/>
<dbReference type="ProteomicsDB" id="265296"/>
<dbReference type="Antibodypedia" id="48809">
    <property type="antibodies" value="18 antibodies from 11 providers"/>
</dbReference>
<dbReference type="Ensembl" id="ENSMUST00000025160.9">
    <property type="protein sequence ID" value="ENSMUSP00000025160.3"/>
    <property type="gene ID" value="ENSMUSG00000024306.14"/>
</dbReference>
<dbReference type="Ensembl" id="ENSMUST00000115837.3">
    <property type="protein sequence ID" value="ENSMUSP00000111503.3"/>
    <property type="gene ID" value="ENSMUSG00000024306.14"/>
</dbReference>
<dbReference type="Ensembl" id="ENSMUST00000234736.2">
    <property type="protein sequence ID" value="ENSMUSP00000157323.2"/>
    <property type="gene ID" value="ENSMUSG00000024306.14"/>
</dbReference>
<dbReference type="GeneID" id="70950"/>
<dbReference type="KEGG" id="mmu:70950"/>
<dbReference type="UCSC" id="uc008efk.1">
    <property type="organism name" value="mouse"/>
</dbReference>
<dbReference type="AGR" id="MGI:1918200"/>
<dbReference type="CTD" id="374864"/>
<dbReference type="MGI" id="MGI:1918200">
    <property type="gene designation" value="Ccdc178"/>
</dbReference>
<dbReference type="VEuPathDB" id="HostDB:ENSMUSG00000024306"/>
<dbReference type="eggNOG" id="ENOG502R7DC">
    <property type="taxonomic scope" value="Eukaryota"/>
</dbReference>
<dbReference type="GeneTree" id="ENSGT00390000012215"/>
<dbReference type="HOGENOM" id="CLU_012461_0_0_1"/>
<dbReference type="InParanoid" id="Q8CDV0"/>
<dbReference type="OMA" id="AICHIQD"/>
<dbReference type="OrthoDB" id="10010556at2759"/>
<dbReference type="PhylomeDB" id="Q8CDV0"/>
<dbReference type="TreeFam" id="TF337479"/>
<dbReference type="BioGRID-ORCS" id="70950">
    <property type="hits" value="1 hit in 76 CRISPR screens"/>
</dbReference>
<dbReference type="ChiTaRS" id="Ccdc178">
    <property type="organism name" value="mouse"/>
</dbReference>
<dbReference type="PRO" id="PR:Q8CDV0"/>
<dbReference type="Proteomes" id="UP000000589">
    <property type="component" value="Chromosome 18"/>
</dbReference>
<dbReference type="RNAct" id="Q8CDV0">
    <property type="molecule type" value="protein"/>
</dbReference>
<dbReference type="Bgee" id="ENSMUSG00000024306">
    <property type="expression patterns" value="Expressed in spermatid and 7 other cell types or tissues"/>
</dbReference>
<dbReference type="ExpressionAtlas" id="Q8CDV0">
    <property type="expression patterns" value="baseline and differential"/>
</dbReference>
<dbReference type="GO" id="GO:0036064">
    <property type="term" value="C:ciliary basal body"/>
    <property type="evidence" value="ECO:0007669"/>
    <property type="project" value="Ensembl"/>
</dbReference>
<dbReference type="InterPro" id="IPR038826">
    <property type="entry name" value="CCDC178"/>
</dbReference>
<dbReference type="PANTHER" id="PTHR35088">
    <property type="entry name" value="COILED-COIL DOMAIN-CONTAINING PROTEIN 178"/>
    <property type="match status" value="1"/>
</dbReference>
<dbReference type="PANTHER" id="PTHR35088:SF1">
    <property type="entry name" value="COILED-COIL DOMAIN-CONTAINING PROTEIN 178"/>
    <property type="match status" value="1"/>
</dbReference>
<evidence type="ECO:0000255" key="1"/>
<evidence type="ECO:0000256" key="2">
    <source>
        <dbReference type="SAM" id="MobiDB-lite"/>
    </source>
</evidence>
<evidence type="ECO:0000305" key="3"/>
<accession>Q8CDV0</accession>
<accession>B7ZN78</accession>
<proteinExistence type="evidence at transcript level"/>